<dbReference type="EMBL" id="FO080401">
    <property type="protein sequence ID" value="CCD63462.1"/>
    <property type="molecule type" value="Genomic_DNA"/>
</dbReference>
<dbReference type="PIR" id="S44833">
    <property type="entry name" value="S44833"/>
</dbReference>
<dbReference type="RefSeq" id="NP_498736.2">
    <property type="nucleotide sequence ID" value="NM_066335.4"/>
</dbReference>
<dbReference type="FunCoup" id="P34459">
    <property type="interactions" value="90"/>
</dbReference>
<dbReference type="PaxDb" id="6239-F54H12.5"/>
<dbReference type="EnsemblMetazoa" id="F54H12.5.1">
    <property type="protein sequence ID" value="F54H12.5.1"/>
    <property type="gene ID" value="WBGene00018845"/>
</dbReference>
<dbReference type="GeneID" id="186269"/>
<dbReference type="KEGG" id="cel:CELE_F54H12.5"/>
<dbReference type="UCSC" id="F54H12.5">
    <property type="organism name" value="c. elegans"/>
</dbReference>
<dbReference type="AGR" id="WB:WBGene00018845"/>
<dbReference type="CTD" id="186269"/>
<dbReference type="WormBase" id="F54H12.5">
    <property type="protein sequence ID" value="CE40700"/>
    <property type="gene ID" value="WBGene00018845"/>
</dbReference>
<dbReference type="eggNOG" id="ENOG502TJME">
    <property type="taxonomic scope" value="Eukaryota"/>
</dbReference>
<dbReference type="GeneTree" id="ENSGT00940000163400"/>
<dbReference type="HOGENOM" id="CLU_824486_0_0_1"/>
<dbReference type="InParanoid" id="P34459"/>
<dbReference type="OMA" id="ESRIICI"/>
<dbReference type="OrthoDB" id="5776267at2759"/>
<dbReference type="PhylomeDB" id="P34459"/>
<dbReference type="PRO" id="PR:P34459"/>
<dbReference type="Proteomes" id="UP000001940">
    <property type="component" value="Chromosome III"/>
</dbReference>
<dbReference type="Bgee" id="WBGene00018845">
    <property type="expression patterns" value="Expressed in embryo and 3 other cell types or tissues"/>
</dbReference>
<dbReference type="InterPro" id="IPR001810">
    <property type="entry name" value="F-box_dom"/>
</dbReference>
<dbReference type="PANTHER" id="PTHR21503:SF8">
    <property type="entry name" value="F-BOX ASSOCIATED DOMAIN-CONTAINING PROTEIN-RELATED"/>
    <property type="match status" value="1"/>
</dbReference>
<dbReference type="PANTHER" id="PTHR21503">
    <property type="entry name" value="F-BOX-CONTAINING HYPOTHETICAL PROTEIN C.ELEGANS"/>
    <property type="match status" value="1"/>
</dbReference>
<dbReference type="Pfam" id="PF00646">
    <property type="entry name" value="F-box"/>
    <property type="match status" value="1"/>
</dbReference>
<dbReference type="PROSITE" id="PS50181">
    <property type="entry name" value="FBOX"/>
    <property type="match status" value="1"/>
</dbReference>
<accession>P34459</accession>
<accession>A3FPI4</accession>
<evidence type="ECO:0000255" key="1">
    <source>
        <dbReference type="PROSITE-ProRule" id="PRU00080"/>
    </source>
</evidence>
<keyword id="KW-1185">Reference proteome</keyword>
<proteinExistence type="predicted"/>
<organism>
    <name type="scientific">Caenorhabditis elegans</name>
    <dbReference type="NCBI Taxonomy" id="6239"/>
    <lineage>
        <taxon>Eukaryota</taxon>
        <taxon>Metazoa</taxon>
        <taxon>Ecdysozoa</taxon>
        <taxon>Nematoda</taxon>
        <taxon>Chromadorea</taxon>
        <taxon>Rhabditida</taxon>
        <taxon>Rhabditina</taxon>
        <taxon>Rhabditomorpha</taxon>
        <taxon>Rhabditoidea</taxon>
        <taxon>Rhabditidae</taxon>
        <taxon>Peloderinae</taxon>
        <taxon>Caenorhabditis</taxon>
    </lineage>
</organism>
<protein>
    <recommendedName>
        <fullName>Uncharacterized protein F54H12.5</fullName>
    </recommendedName>
</protein>
<feature type="chain" id="PRO_0000065369" description="Uncharacterized protein F54H12.5">
    <location>
        <begin position="1"/>
        <end position="337"/>
    </location>
</feature>
<feature type="domain" description="F-box" evidence="1">
    <location>
        <begin position="22"/>
        <end position="76"/>
    </location>
</feature>
<sequence>MLFISRSLLPILYFQLFKKMSPFRLLSLPTLALKNVLLHIDFIDLLELSLASKKCEIYMKTCCLKIDSLHFHFRRIQLNSKSKSLEFDFNSVVDISACSRKVKGSRYDAWTKNYDESRIICIPTNFDEDIIAVFQHFWDLFQIKNLHYDVVGFTGVFLNNTMARLPSKLKSLEFGDYLSGNQDNIDTILNYYDISDNLKVFDEVSKIHEKMKKVNNLSLICLPSIPIEELIQLDCETIKLYWKENSAINAVRSLISNWKGNKTRLEHLEILASEDWNFDLVLEGMNAKPWNPRRRPSNYQKEDLNIDCTSYMDIEGDCQIASIGIRENRYLDFIVWF</sequence>
<reference key="1">
    <citation type="journal article" date="1994" name="Nature">
        <title>2.2 Mb of contiguous nucleotide sequence from chromosome III of C. elegans.</title>
        <authorList>
            <person name="Wilson R."/>
            <person name="Ainscough R."/>
            <person name="Anderson K."/>
            <person name="Baynes C."/>
            <person name="Berks M."/>
            <person name="Bonfield J."/>
            <person name="Burton J."/>
            <person name="Connell M."/>
            <person name="Copsey T."/>
            <person name="Cooper J."/>
            <person name="Coulson A."/>
            <person name="Craxton M."/>
            <person name="Dear S."/>
            <person name="Du Z."/>
            <person name="Durbin R."/>
            <person name="Favello A."/>
            <person name="Fraser A."/>
            <person name="Fulton L."/>
            <person name="Gardner A."/>
            <person name="Green P."/>
            <person name="Hawkins T."/>
            <person name="Hillier L."/>
            <person name="Jier M."/>
            <person name="Johnston L."/>
            <person name="Jones M."/>
            <person name="Kershaw J."/>
            <person name="Kirsten J."/>
            <person name="Laisster N."/>
            <person name="Latreille P."/>
            <person name="Lightning J."/>
            <person name="Lloyd C."/>
            <person name="Mortimore B."/>
            <person name="O'Callaghan M."/>
            <person name="Parsons J."/>
            <person name="Percy C."/>
            <person name="Rifken L."/>
            <person name="Roopra A."/>
            <person name="Saunders D."/>
            <person name="Shownkeen R."/>
            <person name="Sims M."/>
            <person name="Smaldon N."/>
            <person name="Smith A."/>
            <person name="Smith M."/>
            <person name="Sonnhammer E."/>
            <person name="Staden R."/>
            <person name="Sulston J."/>
            <person name="Thierry-Mieg J."/>
            <person name="Thomas K."/>
            <person name="Vaudin M."/>
            <person name="Vaughan K."/>
            <person name="Waterston R."/>
            <person name="Watson A."/>
            <person name="Weinstock L."/>
            <person name="Wilkinson-Sproat J."/>
            <person name="Wohldman P."/>
        </authorList>
    </citation>
    <scope>NUCLEOTIDE SEQUENCE [LARGE SCALE GENOMIC DNA]</scope>
    <source>
        <strain>Bristol N2</strain>
    </source>
</reference>
<reference key="2">
    <citation type="journal article" date="1998" name="Science">
        <title>Genome sequence of the nematode C. elegans: a platform for investigating biology.</title>
        <authorList>
            <consortium name="The C. elegans sequencing consortium"/>
        </authorList>
    </citation>
    <scope>NUCLEOTIDE SEQUENCE [LARGE SCALE GENOMIC DNA]</scope>
    <source>
        <strain>Bristol N2</strain>
    </source>
</reference>
<gene>
    <name type="ORF">F54H12.5</name>
</gene>
<name>YMD5_CAEEL</name>